<organism>
    <name type="scientific">Allochromatium vinosum (strain ATCC 17899 / DSM 180 / NBRC 103801 / NCIMB 10441 / D)</name>
    <name type="common">Chromatium vinosum</name>
    <dbReference type="NCBI Taxonomy" id="572477"/>
    <lineage>
        <taxon>Bacteria</taxon>
        <taxon>Pseudomonadati</taxon>
        <taxon>Pseudomonadota</taxon>
        <taxon>Gammaproteobacteria</taxon>
        <taxon>Chromatiales</taxon>
        <taxon>Chromatiaceae</taxon>
        <taxon>Allochromatium</taxon>
    </lineage>
</organism>
<protein>
    <recommendedName>
        <fullName evidence="1">Ribulose bisphosphate carboxylase large chain 2</fullName>
        <shortName evidence="1">RuBisCO large subunit 2</shortName>
        <ecNumber evidence="1 3">4.1.1.39</ecNumber>
    </recommendedName>
</protein>
<accession>P22859</accession>
<accession>D3RQ48</accession>
<feature type="initiator methionine" description="Removed" evidence="3">
    <location>
        <position position="1"/>
    </location>
</feature>
<feature type="chain" id="PRO_0000062622" description="Ribulose bisphosphate carboxylase large chain 2">
    <location>
        <begin position="2"/>
        <end position="471"/>
    </location>
</feature>
<feature type="active site" description="Proton acceptor" evidence="1">
    <location>
        <position position="168"/>
    </location>
</feature>
<feature type="active site" description="Proton acceptor" evidence="1">
    <location>
        <position position="287"/>
    </location>
</feature>
<feature type="binding site" description="in homodimeric partner" evidence="1">
    <location>
        <position position="116"/>
    </location>
    <ligand>
        <name>substrate</name>
    </ligand>
</feature>
<feature type="binding site" evidence="1">
    <location>
        <position position="166"/>
    </location>
    <ligand>
        <name>substrate</name>
    </ligand>
</feature>
<feature type="binding site" evidence="1">
    <location>
        <position position="170"/>
    </location>
    <ligand>
        <name>substrate</name>
    </ligand>
</feature>
<feature type="binding site" description="via carbamate group" evidence="1">
    <location>
        <position position="194"/>
    </location>
    <ligand>
        <name>Mg(2+)</name>
        <dbReference type="ChEBI" id="CHEBI:18420"/>
    </ligand>
</feature>
<feature type="binding site" evidence="1">
    <location>
        <position position="196"/>
    </location>
    <ligand>
        <name>Mg(2+)</name>
        <dbReference type="ChEBI" id="CHEBI:18420"/>
    </ligand>
</feature>
<feature type="binding site" evidence="1">
    <location>
        <position position="197"/>
    </location>
    <ligand>
        <name>Mg(2+)</name>
        <dbReference type="ChEBI" id="CHEBI:18420"/>
    </ligand>
</feature>
<feature type="binding site" evidence="1">
    <location>
        <position position="288"/>
    </location>
    <ligand>
        <name>substrate</name>
    </ligand>
</feature>
<feature type="binding site" evidence="1">
    <location>
        <position position="320"/>
    </location>
    <ligand>
        <name>substrate</name>
    </ligand>
</feature>
<feature type="binding site" evidence="1">
    <location>
        <position position="372"/>
    </location>
    <ligand>
        <name>substrate</name>
    </ligand>
</feature>
<feature type="site" description="Transition state stabilizer" evidence="1">
    <location>
        <position position="327"/>
    </location>
</feature>
<feature type="modified residue" description="N6-carboxylysine" evidence="1">
    <location>
        <position position="194"/>
    </location>
</feature>
<feature type="disulfide bond" description="Interchain; in linked form" evidence="1">
    <location>
        <position position="240"/>
    </location>
</feature>
<feature type="sequence conflict" description="In Ref. 1; BAA14229." evidence="5" ref="1">
    <original>P</original>
    <variation>R</variation>
    <location>
        <position position="145"/>
    </location>
</feature>
<feature type="sequence conflict" description="In Ref. 1; BAA14229." evidence="5" ref="1">
    <original>Q</original>
    <variation>R</variation>
    <location>
        <position position="222"/>
    </location>
</feature>
<feature type="sequence conflict" description="In Ref. 1; BAA14229." evidence="5" ref="1">
    <original>N</original>
    <variation>H</variation>
    <location>
        <position position="297"/>
    </location>
</feature>
<sequence>MSTKTYDAGVKDYALTYWTPDYVPLDSDLLACFKVTPQAKVSREEAAAAVAAESSTGTWTTVWSDLLTDLDYYKGRAYRIEDVPGDKESFYAFIAYPLDLFEEGSIVNVLTSLVGNVFGFKAVRALRLEDIRFPLHYVKTCGGPPNGIQVERDRMDKYGRPFLGATVKPKLGLSAKNYGRAVYEMLRGGLDFTKDDENVNSQPFMRWQNRFEFVSEAVRKAQEETGERKGHYLNVTAPTCEEMFKRAEFAKECGAPIIMHDFLTGGFTANTSLANWCRDNGMLLHIHRAMHAVIDRNPKHGIHFRVLAKCLRLSGGDHLHTGTVVGKLEGDRQSTLGFVDQLRESFIPEDRSRGLFFDQDWGGMPGVMAVASGGIHVWHIPALVTIFGDDSVLQFGGGTQGHPWGNAAGAAANRVATEACVKARNEGVEIEKHAREVLSDAARHSPELAVAMETWKEIKFEFDVVDKLDAA</sequence>
<proteinExistence type="evidence at protein level"/>
<dbReference type="EC" id="4.1.1.39" evidence="1 3"/>
<dbReference type="EMBL" id="D90204">
    <property type="protein sequence ID" value="BAA14229.1"/>
    <property type="molecule type" value="Genomic_DNA"/>
</dbReference>
<dbReference type="EMBL" id="CP001896">
    <property type="protein sequence ID" value="ADC63659.1"/>
    <property type="molecule type" value="Genomic_DNA"/>
</dbReference>
<dbReference type="PIR" id="JQ0586">
    <property type="entry name" value="RKKRL2"/>
</dbReference>
<dbReference type="RefSeq" id="WP_012971927.1">
    <property type="nucleotide sequence ID" value="NC_013851.1"/>
</dbReference>
<dbReference type="SMR" id="P22859"/>
<dbReference type="STRING" id="572477.Alvin_2750"/>
<dbReference type="KEGG" id="alv:Alvin_2750"/>
<dbReference type="eggNOG" id="COG1850">
    <property type="taxonomic scope" value="Bacteria"/>
</dbReference>
<dbReference type="HOGENOM" id="CLU_031450_2_0_6"/>
<dbReference type="OrthoDB" id="9770811at2"/>
<dbReference type="Proteomes" id="UP000001441">
    <property type="component" value="Chromosome"/>
</dbReference>
<dbReference type="GO" id="GO:0000287">
    <property type="term" value="F:magnesium ion binding"/>
    <property type="evidence" value="ECO:0007669"/>
    <property type="project" value="UniProtKB-UniRule"/>
</dbReference>
<dbReference type="GO" id="GO:0004497">
    <property type="term" value="F:monooxygenase activity"/>
    <property type="evidence" value="ECO:0007669"/>
    <property type="project" value="UniProtKB-KW"/>
</dbReference>
<dbReference type="GO" id="GO:0016984">
    <property type="term" value="F:ribulose-bisphosphate carboxylase activity"/>
    <property type="evidence" value="ECO:0007669"/>
    <property type="project" value="UniProtKB-UniRule"/>
</dbReference>
<dbReference type="GO" id="GO:0019253">
    <property type="term" value="P:reductive pentose-phosphate cycle"/>
    <property type="evidence" value="ECO:0007669"/>
    <property type="project" value="UniProtKB-UniRule"/>
</dbReference>
<dbReference type="Gene3D" id="3.20.20.110">
    <property type="entry name" value="Ribulose bisphosphate carboxylase, large subunit, C-terminal domain"/>
    <property type="match status" value="1"/>
</dbReference>
<dbReference type="Gene3D" id="3.30.70.150">
    <property type="entry name" value="RuBisCO large subunit, N-terminal domain"/>
    <property type="match status" value="1"/>
</dbReference>
<dbReference type="HAMAP" id="MF_01338">
    <property type="entry name" value="RuBisCO_L_type1"/>
    <property type="match status" value="1"/>
</dbReference>
<dbReference type="InterPro" id="IPR033966">
    <property type="entry name" value="RuBisCO"/>
</dbReference>
<dbReference type="InterPro" id="IPR020878">
    <property type="entry name" value="RuBisCo_large_chain_AS"/>
</dbReference>
<dbReference type="InterPro" id="IPR000685">
    <property type="entry name" value="RuBisCO_lsu_C"/>
</dbReference>
<dbReference type="InterPro" id="IPR036376">
    <property type="entry name" value="RuBisCO_lsu_C_sf"/>
</dbReference>
<dbReference type="InterPro" id="IPR017443">
    <property type="entry name" value="RuBisCO_lsu_fd_N"/>
</dbReference>
<dbReference type="InterPro" id="IPR036422">
    <property type="entry name" value="RuBisCO_lsu_N_sf"/>
</dbReference>
<dbReference type="InterPro" id="IPR020888">
    <property type="entry name" value="RuBisCO_lsuI"/>
</dbReference>
<dbReference type="NCBIfam" id="NF003252">
    <property type="entry name" value="PRK04208.1"/>
    <property type="match status" value="1"/>
</dbReference>
<dbReference type="PANTHER" id="PTHR42704">
    <property type="entry name" value="RIBULOSE BISPHOSPHATE CARBOXYLASE"/>
    <property type="match status" value="1"/>
</dbReference>
<dbReference type="PANTHER" id="PTHR42704:SF17">
    <property type="entry name" value="RIBULOSE BISPHOSPHATE CARBOXYLASE LARGE CHAIN"/>
    <property type="match status" value="1"/>
</dbReference>
<dbReference type="Pfam" id="PF00016">
    <property type="entry name" value="RuBisCO_large"/>
    <property type="match status" value="1"/>
</dbReference>
<dbReference type="Pfam" id="PF02788">
    <property type="entry name" value="RuBisCO_large_N"/>
    <property type="match status" value="1"/>
</dbReference>
<dbReference type="SFLD" id="SFLDG01052">
    <property type="entry name" value="RuBisCO"/>
    <property type="match status" value="1"/>
</dbReference>
<dbReference type="SFLD" id="SFLDS00014">
    <property type="entry name" value="RuBisCO"/>
    <property type="match status" value="1"/>
</dbReference>
<dbReference type="SFLD" id="SFLDG00301">
    <property type="entry name" value="RuBisCO-like_proteins"/>
    <property type="match status" value="1"/>
</dbReference>
<dbReference type="SUPFAM" id="SSF51649">
    <property type="entry name" value="RuBisCo, C-terminal domain"/>
    <property type="match status" value="1"/>
</dbReference>
<dbReference type="SUPFAM" id="SSF54966">
    <property type="entry name" value="RuBisCO, large subunit, small (N-terminal) domain"/>
    <property type="match status" value="1"/>
</dbReference>
<dbReference type="PROSITE" id="PS00157">
    <property type="entry name" value="RUBISCO_LARGE"/>
    <property type="match status" value="1"/>
</dbReference>
<comment type="function">
    <text>RuBisCO catalyzes two reactions: the carboxylation of D-ribulose 1,5-bisphosphate, the primary event in carbon dioxide fixation, as well as the oxidative fragmentation of the pentose substrate. Both reactions occur simultaneously and in competition at the same active site.</text>
</comment>
<comment type="catalytic activity">
    <reaction evidence="1 3">
        <text>2 (2R)-3-phosphoglycerate + 2 H(+) = D-ribulose 1,5-bisphosphate + CO2 + H2O</text>
        <dbReference type="Rhea" id="RHEA:23124"/>
        <dbReference type="ChEBI" id="CHEBI:15377"/>
        <dbReference type="ChEBI" id="CHEBI:15378"/>
        <dbReference type="ChEBI" id="CHEBI:16526"/>
        <dbReference type="ChEBI" id="CHEBI:57870"/>
        <dbReference type="ChEBI" id="CHEBI:58272"/>
        <dbReference type="EC" id="4.1.1.39"/>
    </reaction>
</comment>
<comment type="catalytic activity">
    <reaction evidence="1">
        <text>D-ribulose 1,5-bisphosphate + O2 = 2-phosphoglycolate + (2R)-3-phosphoglycerate + 2 H(+)</text>
        <dbReference type="Rhea" id="RHEA:36631"/>
        <dbReference type="ChEBI" id="CHEBI:15378"/>
        <dbReference type="ChEBI" id="CHEBI:15379"/>
        <dbReference type="ChEBI" id="CHEBI:57870"/>
        <dbReference type="ChEBI" id="CHEBI:58033"/>
        <dbReference type="ChEBI" id="CHEBI:58272"/>
    </reaction>
</comment>
<comment type="cofactor">
    <cofactor evidence="1">
        <name>Mg(2+)</name>
        <dbReference type="ChEBI" id="CHEBI:18420"/>
    </cofactor>
    <text evidence="1">Binds 1 Mg(2+) ion per subunit.</text>
</comment>
<comment type="biophysicochemical properties">
    <kinetics>
        <KM evidence="3">32.8 uM for CO2 purified from A.vinosum in vivo</KM>
        <KM evidence="2 3">71.6 uM for CO2, enzyme expressed in E.coli</KM>
        <KM evidence="3">14.2 uM for D-ribulose 1,5-bisphosphate purified from A.vinosum in vivo</KM>
        <KM evidence="3">22.1 uM for D-ribulose 1,5-bisphosphate, enzyme expressed in E.coli</KM>
        <Vmax evidence="2 3">6.2 umol/min/mg enzyme purified from A.vinosum in vivo</Vmax>
        <Vmax evidence="3">5.9 umol/min/mg enzyme expressed in E.coli</Vmax>
        <text evidence="2 3">This enzyme requires a lac or tac promoter for expression in E.coli and has different kinetics than the enzyme purified in vivo, suggesting this is not expressed in A.vinosum.</text>
    </kinetics>
</comment>
<comment type="subunit">
    <text evidence="1 6 7">Heterohexadecamer of 8 large chains and 8 small chains; disulfide-linked. The disulfide link is formed within the large subunit homodimers.</text>
</comment>
<comment type="PTM">
    <text evidence="1">The disulfide bond which can form in the large chain dimeric partners within the hexadecamer appears to be associated with oxidative stress and protein turnover.</text>
</comment>
<comment type="miscellaneous">
    <text evidence="1">The basic functional RuBisCO is composed of a large chain homodimer in a 'head-to-tail' conformation. In form I RuBisCO this homodimer is arranged in a barrel-like tetramer with the small subunits forming a tetrameric 'cap' on each end of the 'barrel'.</text>
</comment>
<comment type="similarity">
    <text evidence="1">Belongs to the RuBisCO large chain family. Type I subfamily.</text>
</comment>
<comment type="caution">
    <text evidence="2 3">In C.vinosum two similar set of genes code for RuBisCO large and small chains: the RbcL-RbcS (this entry) and the RbcA-RbcB pair. Under standard photoautotrophic culture conditions only the latter pair seems active, the former probably being cryptic.</text>
</comment>
<gene>
    <name evidence="1" type="primary">cbbL2</name>
    <name evidence="1 4" type="synonym">rbcL</name>
    <name type="ordered locus">Alvin_2750</name>
</gene>
<evidence type="ECO:0000255" key="1">
    <source>
        <dbReference type="HAMAP-Rule" id="MF_01338"/>
    </source>
</evidence>
<evidence type="ECO:0000269" key="2">
    <source>
    </source>
</evidence>
<evidence type="ECO:0000269" key="3">
    <source>
    </source>
</evidence>
<evidence type="ECO:0000303" key="4">
    <source>
    </source>
</evidence>
<evidence type="ECO:0000305" key="5"/>
<evidence type="ECO:0000305" key="6">
    <source>
    </source>
</evidence>
<evidence type="ECO:0000305" key="7">
    <source>
    </source>
</evidence>
<reference key="1">
    <citation type="journal article" date="1991" name="Gene">
        <title>Sequence and expression of genes encoding the large and small subunits of ribulose 1,5-bisphosphate carboxylase/oxygenase from Chromatium vinosum.</title>
        <authorList>
            <person name="Kobayashi H."/>
            <person name="Viale A.M."/>
            <person name="Takabe T."/>
            <person name="Akazawa T."/>
            <person name="Wada K."/>
            <person name="Shinozaki K."/>
            <person name="Kobayashi K."/>
            <person name="Sugiura M."/>
        </authorList>
    </citation>
    <scope>NUCLEOTIDE SEQUENCE [GENOMIC DNA]</scope>
    <scope>FUNCTION</scope>
    <scope>CATALYTIC ACTIVITY</scope>
    <scope>BIOPHYSICOCHEMICAL PROPERTIES</scope>
    <scope>SUBUNIT</scope>
    <source>
        <strain>ATCC 17899 / DSM 180 / NBRC 103801 / NCIMB 10441 / D</strain>
    </source>
</reference>
<reference key="2">
    <citation type="journal article" date="2011" name="Stand. Genomic Sci.">
        <title>Complete genome sequence of Allochromatium vinosum DSM 180(T).</title>
        <authorList>
            <person name="Weissgerber T."/>
            <person name="Zigann R."/>
            <person name="Bruce D."/>
            <person name="Chang Y.J."/>
            <person name="Detter J.C."/>
            <person name="Han C."/>
            <person name="Hauser L."/>
            <person name="Jeffries C.D."/>
            <person name="Land M."/>
            <person name="Munk A.C."/>
            <person name="Tapia R."/>
            <person name="Dahl C."/>
        </authorList>
    </citation>
    <scope>NUCLEOTIDE SEQUENCE [LARGE SCALE GENOMIC DNA]</scope>
    <source>
        <strain>ATCC 17899 / DSM 180 / NBRC 103801 / NCIMB 10441 / D</strain>
    </source>
</reference>
<reference key="3">
    <citation type="journal article" date="1990" name="J. Biol. Chem.">
        <title>Distinct properties of Escherichia coli products of plant-type ribulose-1,5-bisphosphate carboxylase/oxygenase directed by two sets of genes from the photosynthetic bacterium Chromatium vinosum.</title>
        <authorList>
            <person name="Viale A.M."/>
            <person name="Kobayashi H."/>
            <person name="Akazawa T."/>
        </authorList>
    </citation>
    <scope>PROTEIN SEQUENCE OF 2-26</scope>
    <scope>FUNCTION</scope>
    <scope>CATALYTIC ACTIVITY</scope>
    <scope>BIOPHYSICOCHEMICAL PROPERTIES</scope>
    <scope>SUBUNIT</scope>
</reference>
<keyword id="KW-0113">Calvin cycle</keyword>
<keyword id="KW-0120">Carbon dioxide fixation</keyword>
<keyword id="KW-0903">Direct protein sequencing</keyword>
<keyword id="KW-1015">Disulfide bond</keyword>
<keyword id="KW-0456">Lyase</keyword>
<keyword id="KW-0460">Magnesium</keyword>
<keyword id="KW-0479">Metal-binding</keyword>
<keyword id="KW-0503">Monooxygenase</keyword>
<keyword id="KW-0560">Oxidoreductase</keyword>
<keyword id="KW-0602">Photosynthesis</keyword>
<keyword id="KW-1185">Reference proteome</keyword>
<name>RBL1B_ALLVD</name>